<comment type="function">
    <text evidence="1">Murein-degrading enzyme. May play a role in recycling of muropeptides during cell elongation and/or cell division.</text>
</comment>
<comment type="catalytic activity">
    <reaction evidence="1">
        <text>Exolytic cleavage of the (1-&gt;4)-beta-glycosidic linkage between N-acetylmuramic acid (MurNAc) and N-acetylglucosamine (GlcNAc) residues in peptidoglycan, from either the reducing or the non-reducing ends of the peptidoglycan chains, with concomitant formation of a 1,6-anhydrobond in the MurNAc residue.</text>
        <dbReference type="EC" id="4.2.2.n1"/>
    </reaction>
</comment>
<comment type="subcellular location">
    <subcellularLocation>
        <location evidence="1">Cell outer membrane</location>
        <topology evidence="1">Lipid-anchor</topology>
    </subcellularLocation>
</comment>
<comment type="similarity">
    <text evidence="1">Belongs to the transglycosylase Slt family.</text>
</comment>
<gene>
    <name evidence="1" type="primary">mltC</name>
    <name type="ordered locus">ECH74115_4267</name>
</gene>
<proteinExistence type="inferred from homology"/>
<evidence type="ECO:0000255" key="1">
    <source>
        <dbReference type="HAMAP-Rule" id="MF_01616"/>
    </source>
</evidence>
<name>MLTC_ECO5E</name>
<reference key="1">
    <citation type="journal article" date="2011" name="Proc. Natl. Acad. Sci. U.S.A.">
        <title>Genomic anatomy of Escherichia coli O157:H7 outbreaks.</title>
        <authorList>
            <person name="Eppinger M."/>
            <person name="Mammel M.K."/>
            <person name="Leclerc J.E."/>
            <person name="Ravel J."/>
            <person name="Cebula T.A."/>
        </authorList>
    </citation>
    <scope>NUCLEOTIDE SEQUENCE [LARGE SCALE GENOMIC DNA]</scope>
    <source>
        <strain>EC4115 / EHEC</strain>
    </source>
</reference>
<accession>B5YQG2</accession>
<sequence>MKKYLALALIAPLLISCSTTKKGGTYNEAWVKDTNGFDILMGQFAHNIENIWGFKEVVIAGPKDYVKYTDQYQTRSHINFDDGTITIETIAGTEPAAHLRRAIIKTLLMGDDPSSVDLYSDVDDITISKEPFLYGQVVDNTGQPIRWEGRASNFADYLLKNRLKSRSNGLRIIYSVTINMVPNHLDKRAHKYLGMVRQASRKYGVDESLILAIMQTESSFNPYAVSRSDALGLMQVVQHTAGKDVFRSQGKSGTPSRSFLFDPASNIDTGTAYLAMLNNVYLGGIDNPTSRRYAVITAYNGGAGSVLRVFSNDKIQAANIINTMTPGDVYQTLTTRHPSAESRRYLYKVNTAQKSYRRR</sequence>
<organism>
    <name type="scientific">Escherichia coli O157:H7 (strain EC4115 / EHEC)</name>
    <dbReference type="NCBI Taxonomy" id="444450"/>
    <lineage>
        <taxon>Bacteria</taxon>
        <taxon>Pseudomonadati</taxon>
        <taxon>Pseudomonadota</taxon>
        <taxon>Gammaproteobacteria</taxon>
        <taxon>Enterobacterales</taxon>
        <taxon>Enterobacteriaceae</taxon>
        <taxon>Escherichia</taxon>
    </lineage>
</organism>
<feature type="signal peptide" evidence="1">
    <location>
        <begin position="1"/>
        <end position="16"/>
    </location>
</feature>
<feature type="chain" id="PRO_1000185920" description="Membrane-bound lytic murein transglycosylase C">
    <location>
        <begin position="17"/>
        <end position="359"/>
    </location>
</feature>
<feature type="lipid moiety-binding region" description="N-palmitoyl cysteine" evidence="1">
    <location>
        <position position="17"/>
    </location>
</feature>
<feature type="lipid moiety-binding region" description="S-diacylglycerol cysteine" evidence="1">
    <location>
        <position position="17"/>
    </location>
</feature>
<protein>
    <recommendedName>
        <fullName evidence="1">Membrane-bound lytic murein transglycosylase C</fullName>
        <ecNumber evidence="1">4.2.2.n1</ecNumber>
    </recommendedName>
    <alternativeName>
        <fullName evidence="1">Murein lyase C</fullName>
    </alternativeName>
</protein>
<dbReference type="EC" id="4.2.2.n1" evidence="1"/>
<dbReference type="EMBL" id="CP001164">
    <property type="protein sequence ID" value="ACI39542.1"/>
    <property type="molecule type" value="Genomic_DNA"/>
</dbReference>
<dbReference type="RefSeq" id="WP_001302020.1">
    <property type="nucleotide sequence ID" value="NC_011353.1"/>
</dbReference>
<dbReference type="SMR" id="B5YQG2"/>
<dbReference type="CAZy" id="GH23">
    <property type="family name" value="Glycoside Hydrolase Family 23"/>
</dbReference>
<dbReference type="KEGG" id="ecf:ECH74115_4267"/>
<dbReference type="HOGENOM" id="CLU_044583_0_0_6"/>
<dbReference type="GO" id="GO:0009279">
    <property type="term" value="C:cell outer membrane"/>
    <property type="evidence" value="ECO:0007669"/>
    <property type="project" value="UniProtKB-SubCell"/>
</dbReference>
<dbReference type="GO" id="GO:0016798">
    <property type="term" value="F:hydrolase activity, acting on glycosyl bonds"/>
    <property type="evidence" value="ECO:0007669"/>
    <property type="project" value="InterPro"/>
</dbReference>
<dbReference type="GO" id="GO:0008933">
    <property type="term" value="F:peptidoglycan lytic transglycosylase activity"/>
    <property type="evidence" value="ECO:0007669"/>
    <property type="project" value="UniProtKB-UniRule"/>
</dbReference>
<dbReference type="GO" id="GO:0016998">
    <property type="term" value="P:cell wall macromolecule catabolic process"/>
    <property type="evidence" value="ECO:0007669"/>
    <property type="project" value="UniProtKB-UniRule"/>
</dbReference>
<dbReference type="GO" id="GO:0071555">
    <property type="term" value="P:cell wall organization"/>
    <property type="evidence" value="ECO:0007669"/>
    <property type="project" value="UniProtKB-KW"/>
</dbReference>
<dbReference type="GO" id="GO:0000270">
    <property type="term" value="P:peptidoglycan metabolic process"/>
    <property type="evidence" value="ECO:0007669"/>
    <property type="project" value="InterPro"/>
</dbReference>
<dbReference type="CDD" id="cd16893">
    <property type="entry name" value="LT_MltC_MltE"/>
    <property type="match status" value="1"/>
</dbReference>
<dbReference type="FunFam" id="1.10.530.10:FF:000002">
    <property type="entry name" value="Membrane-bound lytic murein transglycosylase C"/>
    <property type="match status" value="1"/>
</dbReference>
<dbReference type="Gene3D" id="1.10.530.10">
    <property type="match status" value="1"/>
</dbReference>
<dbReference type="HAMAP" id="MF_01616">
    <property type="entry name" value="MltC"/>
    <property type="match status" value="1"/>
</dbReference>
<dbReference type="InterPro" id="IPR023346">
    <property type="entry name" value="Lysozyme-like_dom_sf"/>
</dbReference>
<dbReference type="InterPro" id="IPR023664">
    <property type="entry name" value="Murein_transglycosylaseC"/>
</dbReference>
<dbReference type="InterPro" id="IPR024570">
    <property type="entry name" value="Murein_transglycosylaseC_N"/>
</dbReference>
<dbReference type="InterPro" id="IPR000189">
    <property type="entry name" value="Transglyc_AS"/>
</dbReference>
<dbReference type="InterPro" id="IPR008258">
    <property type="entry name" value="Transglycosylase_SLT_dom_1"/>
</dbReference>
<dbReference type="NCBIfam" id="NF008670">
    <property type="entry name" value="PRK11671.1"/>
    <property type="match status" value="1"/>
</dbReference>
<dbReference type="PANTHER" id="PTHR37423:SF2">
    <property type="entry name" value="MEMBRANE-BOUND LYTIC MUREIN TRANSGLYCOSYLASE C"/>
    <property type="match status" value="1"/>
</dbReference>
<dbReference type="PANTHER" id="PTHR37423">
    <property type="entry name" value="SOLUBLE LYTIC MUREIN TRANSGLYCOSYLASE-RELATED"/>
    <property type="match status" value="1"/>
</dbReference>
<dbReference type="Pfam" id="PF11873">
    <property type="entry name" value="Mltc_N"/>
    <property type="match status" value="1"/>
</dbReference>
<dbReference type="Pfam" id="PF01464">
    <property type="entry name" value="SLT"/>
    <property type="match status" value="1"/>
</dbReference>
<dbReference type="SUPFAM" id="SSF53955">
    <property type="entry name" value="Lysozyme-like"/>
    <property type="match status" value="1"/>
</dbReference>
<dbReference type="PROSITE" id="PS51257">
    <property type="entry name" value="PROKAR_LIPOPROTEIN"/>
    <property type="match status" value="1"/>
</dbReference>
<dbReference type="PROSITE" id="PS00922">
    <property type="entry name" value="TRANSGLYCOSYLASE"/>
    <property type="match status" value="1"/>
</dbReference>
<keyword id="KW-0998">Cell outer membrane</keyword>
<keyword id="KW-0961">Cell wall biogenesis/degradation</keyword>
<keyword id="KW-0449">Lipoprotein</keyword>
<keyword id="KW-0456">Lyase</keyword>
<keyword id="KW-0472">Membrane</keyword>
<keyword id="KW-0564">Palmitate</keyword>
<keyword id="KW-0732">Signal</keyword>